<proteinExistence type="evidence at protein level"/>
<protein>
    <recommendedName>
        <fullName evidence="1">Glutamine--tRNA ligase</fullName>
        <ecNumber evidence="1">6.1.1.18</ecNumber>
    </recommendedName>
    <alternativeName>
        <fullName evidence="1">Glutaminyl-tRNA synthetase</fullName>
        <shortName evidence="1">GlnRS</shortName>
    </alternativeName>
</protein>
<evidence type="ECO:0000255" key="1">
    <source>
        <dbReference type="HAMAP-Rule" id="MF_00126"/>
    </source>
</evidence>
<evidence type="ECO:0007829" key="2">
    <source>
        <dbReference type="PDB" id="5BNZ"/>
    </source>
</evidence>
<name>SYQ_PSEAE</name>
<feature type="chain" id="PRO_0000195843" description="Glutamine--tRNA ligase">
    <location>
        <begin position="1"/>
        <end position="556"/>
    </location>
</feature>
<feature type="short sequence motif" description="'HIGH' region" evidence="1">
    <location>
        <begin position="35"/>
        <end position="45"/>
    </location>
</feature>
<feature type="short sequence motif" description="'KMSKS' region" evidence="1">
    <location>
        <begin position="269"/>
        <end position="273"/>
    </location>
</feature>
<feature type="binding site" evidence="1">
    <location>
        <begin position="36"/>
        <end position="38"/>
    </location>
    <ligand>
        <name>ATP</name>
        <dbReference type="ChEBI" id="CHEBI:30616"/>
    </ligand>
</feature>
<feature type="binding site" evidence="1">
    <location>
        <begin position="42"/>
        <end position="48"/>
    </location>
    <ligand>
        <name>ATP</name>
        <dbReference type="ChEBI" id="CHEBI:30616"/>
    </ligand>
</feature>
<feature type="binding site" evidence="1">
    <location>
        <position position="68"/>
    </location>
    <ligand>
        <name>L-glutamine</name>
        <dbReference type="ChEBI" id="CHEBI:58359"/>
    </ligand>
</feature>
<feature type="binding site" evidence="1">
    <location>
        <position position="213"/>
    </location>
    <ligand>
        <name>L-glutamine</name>
        <dbReference type="ChEBI" id="CHEBI:58359"/>
    </ligand>
</feature>
<feature type="binding site" evidence="1">
    <location>
        <position position="232"/>
    </location>
    <ligand>
        <name>ATP</name>
        <dbReference type="ChEBI" id="CHEBI:30616"/>
    </ligand>
</feature>
<feature type="binding site" evidence="1">
    <location>
        <begin position="262"/>
        <end position="263"/>
    </location>
    <ligand>
        <name>ATP</name>
        <dbReference type="ChEBI" id="CHEBI:30616"/>
    </ligand>
</feature>
<feature type="helix" evidence="2">
    <location>
        <begin position="12"/>
        <end position="22"/>
    </location>
</feature>
<feature type="strand" evidence="2">
    <location>
        <begin position="30"/>
        <end position="33"/>
    </location>
</feature>
<feature type="strand" evidence="2">
    <location>
        <begin position="37"/>
        <end position="39"/>
    </location>
</feature>
<feature type="helix" evidence="2">
    <location>
        <begin position="43"/>
        <end position="58"/>
    </location>
</feature>
<feature type="strand" evidence="2">
    <location>
        <begin position="62"/>
        <end position="67"/>
    </location>
</feature>
<feature type="helix" evidence="2">
    <location>
        <begin position="76"/>
        <end position="89"/>
    </location>
</feature>
<feature type="strand" evidence="2">
    <location>
        <begin position="95"/>
        <end position="97"/>
    </location>
</feature>
<feature type="helix" evidence="2">
    <location>
        <begin position="101"/>
        <end position="104"/>
    </location>
</feature>
<feature type="helix" evidence="2">
    <location>
        <begin position="105"/>
        <end position="117"/>
    </location>
</feature>
<feature type="strand" evidence="2">
    <location>
        <begin position="121"/>
        <end position="124"/>
    </location>
</feature>
<feature type="helix" evidence="2">
    <location>
        <begin position="128"/>
        <end position="135"/>
    </location>
</feature>
<feature type="strand" evidence="2">
    <location>
        <begin position="138"/>
        <end position="140"/>
    </location>
</feature>
<feature type="turn" evidence="2">
    <location>
        <begin position="146"/>
        <end position="149"/>
    </location>
</feature>
<feature type="helix" evidence="2">
    <location>
        <begin position="152"/>
        <end position="163"/>
    </location>
</feature>
<feature type="strand" evidence="2">
    <location>
        <begin position="173"/>
        <end position="176"/>
    </location>
</feature>
<feature type="helix" evidence="2">
    <location>
        <begin position="185"/>
        <end position="187"/>
    </location>
</feature>
<feature type="strand" evidence="2">
    <location>
        <begin position="191"/>
        <end position="195"/>
    </location>
</feature>
<feature type="turn" evidence="2">
    <location>
        <begin position="201"/>
        <end position="203"/>
    </location>
</feature>
<feature type="strand" evidence="2">
    <location>
        <begin position="208"/>
        <end position="211"/>
    </location>
</feature>
<feature type="helix" evidence="2">
    <location>
        <begin position="213"/>
        <end position="224"/>
    </location>
</feature>
<feature type="strand" evidence="2">
    <location>
        <begin position="227"/>
        <end position="232"/>
    </location>
</feature>
<feature type="helix" evidence="2">
    <location>
        <begin position="233"/>
        <end position="238"/>
    </location>
</feature>
<feature type="helix" evidence="2">
    <location>
        <begin position="239"/>
        <end position="248"/>
    </location>
</feature>
<feature type="strand" evidence="2">
    <location>
        <begin position="256"/>
        <end position="260"/>
    </location>
</feature>
<feature type="helix" evidence="2">
    <location>
        <begin position="272"/>
        <end position="280"/>
    </location>
</feature>
<feature type="strand" evidence="2">
    <location>
        <begin position="283"/>
        <end position="286"/>
    </location>
</feature>
<feature type="strand" evidence="2">
    <location>
        <begin position="292"/>
        <end position="294"/>
    </location>
</feature>
<feature type="helix" evidence="2">
    <location>
        <begin position="295"/>
        <end position="301"/>
    </location>
</feature>
<feature type="helix" evidence="2">
    <location>
        <begin position="305"/>
        <end position="315"/>
    </location>
</feature>
<feature type="helix" evidence="2">
    <location>
        <begin position="327"/>
        <end position="340"/>
    </location>
</feature>
<feature type="strand" evidence="2">
    <location>
        <begin position="346"/>
        <end position="355"/>
    </location>
</feature>
<feature type="strand" evidence="2">
    <location>
        <begin position="363"/>
        <end position="370"/>
    </location>
</feature>
<feature type="strand" evidence="2">
    <location>
        <begin position="372"/>
        <end position="374"/>
    </location>
</feature>
<feature type="strand" evidence="2">
    <location>
        <begin position="378"/>
        <end position="390"/>
    </location>
</feature>
<feature type="helix" evidence="2">
    <location>
        <begin position="391"/>
        <end position="393"/>
    </location>
</feature>
<feature type="strand" evidence="2">
    <location>
        <begin position="410"/>
        <end position="413"/>
    </location>
</feature>
<feature type="strand" evidence="2">
    <location>
        <begin position="418"/>
        <end position="426"/>
    </location>
</feature>
<feature type="strand" evidence="2">
    <location>
        <begin position="432"/>
        <end position="440"/>
    </location>
</feature>
<feature type="strand" evidence="2">
    <location>
        <begin position="460"/>
        <end position="462"/>
    </location>
</feature>
<feature type="strand" evidence="2">
    <location>
        <begin position="466"/>
        <end position="473"/>
    </location>
</feature>
<feature type="strand" evidence="2">
    <location>
        <begin position="476"/>
        <end position="481"/>
    </location>
</feature>
<feature type="helix" evidence="2">
    <location>
        <begin position="491"/>
        <end position="494"/>
    </location>
</feature>
<feature type="strand" evidence="2">
    <location>
        <begin position="499"/>
        <end position="508"/>
    </location>
</feature>
<feature type="helix" evidence="2">
    <location>
        <begin position="510"/>
        <end position="514"/>
    </location>
</feature>
<feature type="strand" evidence="2">
    <location>
        <begin position="520"/>
        <end position="523"/>
    </location>
</feature>
<feature type="turn" evidence="2">
    <location>
        <begin position="524"/>
        <end position="526"/>
    </location>
</feature>
<feature type="strand" evidence="2">
    <location>
        <begin position="527"/>
        <end position="531"/>
    </location>
</feature>
<feature type="turn" evidence="2">
    <location>
        <begin position="533"/>
        <end position="535"/>
    </location>
</feature>
<feature type="strand" evidence="2">
    <location>
        <begin position="543"/>
        <end position="547"/>
    </location>
</feature>
<sequence length="556" mass="62913">MSKPETTAAPNFLRQIVQADLDAGKHAKIVTRFPPEPNGYLHIGHAKSICLNFGLAQEFAGDCHLRFDDTNPAKEDQEYIDAIEADIKWLGFQWSGEVCYASNYFDQLHAWAVELIKAGKAFVCDLGPEEMREYRGTLTEPGRNSPYRDRSVEENLDLFARMKAGEFPDGARSLRAKIDMGSPNMNLRDPILYRIRHAHHHQTGDKWCIYPSYDFTHGQSDAIEGITHSICTLEFEDHRPLYEWFLANLPVPAQPRQYEFSRLNLNYTVTSKRKLKQLVDEGHVSGWDDPRMSTLSGYRRRGYTPESIRNFCEMIGVNRASGVVDIGMLEFSIRDHLDATAPRAMCVLKPLKVVITNYPEGQVENLELPRHPKEDMGVRVLPFGRELFIDAGDFEEVPPAGYKRLIPGGEVRLRGSYVIRADEAIKDADGNIVELRCSYDPDTLGKNPEGRKVKGVIHWVPAEGSVECEVRLYDRLFRSANPEKAEEGGSFLDNINADSLQVLAGCRAEPSLGQANPEDRFQFEREGYFVADLKDSRPGKPVFNRTVTLRDSWGQG</sequence>
<dbReference type="EC" id="6.1.1.18" evidence="1"/>
<dbReference type="EMBL" id="AE004091">
    <property type="protein sequence ID" value="AAG05183.1"/>
    <property type="molecule type" value="Genomic_DNA"/>
</dbReference>
<dbReference type="PIR" id="F83421">
    <property type="entry name" value="F83421"/>
</dbReference>
<dbReference type="RefSeq" id="NP_250485.1">
    <property type="nucleotide sequence ID" value="NC_002516.2"/>
</dbReference>
<dbReference type="RefSeq" id="WP_003113586.1">
    <property type="nucleotide sequence ID" value="NZ_QZGE01000003.1"/>
</dbReference>
<dbReference type="PDB" id="5BNZ">
    <property type="method" value="X-ray"/>
    <property type="resolution" value="1.90 A"/>
    <property type="chains" value="A/B=1-556"/>
</dbReference>
<dbReference type="PDBsum" id="5BNZ"/>
<dbReference type="SMR" id="Q9I2U8"/>
<dbReference type="FunCoup" id="Q9I2U8">
    <property type="interactions" value="615"/>
</dbReference>
<dbReference type="STRING" id="208964.PA1794"/>
<dbReference type="PaxDb" id="208964-PA1794"/>
<dbReference type="GeneID" id="878828"/>
<dbReference type="KEGG" id="pae:PA1794"/>
<dbReference type="PATRIC" id="fig|208964.12.peg.1861"/>
<dbReference type="PseudoCAP" id="PA1794"/>
<dbReference type="HOGENOM" id="CLU_001882_2_3_6"/>
<dbReference type="InParanoid" id="Q9I2U8"/>
<dbReference type="OrthoDB" id="9801560at2"/>
<dbReference type="PhylomeDB" id="Q9I2U8"/>
<dbReference type="BioCyc" id="PAER208964:G1FZ6-1826-MONOMER"/>
<dbReference type="EvolutionaryTrace" id="Q9I2U8"/>
<dbReference type="Proteomes" id="UP000002438">
    <property type="component" value="Chromosome"/>
</dbReference>
<dbReference type="GO" id="GO:0005829">
    <property type="term" value="C:cytosol"/>
    <property type="evidence" value="ECO:0000318"/>
    <property type="project" value="GO_Central"/>
</dbReference>
<dbReference type="GO" id="GO:0005524">
    <property type="term" value="F:ATP binding"/>
    <property type="evidence" value="ECO:0007669"/>
    <property type="project" value="UniProtKB-UniRule"/>
</dbReference>
<dbReference type="GO" id="GO:0004819">
    <property type="term" value="F:glutamine-tRNA ligase activity"/>
    <property type="evidence" value="ECO:0000318"/>
    <property type="project" value="GO_Central"/>
</dbReference>
<dbReference type="GO" id="GO:0006425">
    <property type="term" value="P:glutaminyl-tRNA aminoacylation"/>
    <property type="evidence" value="ECO:0000318"/>
    <property type="project" value="GO_Central"/>
</dbReference>
<dbReference type="GO" id="GO:0006424">
    <property type="term" value="P:glutamyl-tRNA aminoacylation"/>
    <property type="evidence" value="ECO:0007669"/>
    <property type="project" value="UniProtKB-UniRule"/>
</dbReference>
<dbReference type="CDD" id="cd00807">
    <property type="entry name" value="GlnRS_core"/>
    <property type="match status" value="1"/>
</dbReference>
<dbReference type="FunFam" id="1.10.1160.10:FF:000001">
    <property type="entry name" value="Glutamine--tRNA ligase"/>
    <property type="match status" value="1"/>
</dbReference>
<dbReference type="FunFam" id="2.40.240.10:FF:000001">
    <property type="entry name" value="Glutamine--tRNA ligase"/>
    <property type="match status" value="1"/>
</dbReference>
<dbReference type="FunFam" id="3.90.800.10:FF:000001">
    <property type="entry name" value="Glutamine--tRNA ligase"/>
    <property type="match status" value="1"/>
</dbReference>
<dbReference type="FunFam" id="3.40.50.620:FF:000037">
    <property type="entry name" value="Glutamine--tRNA ligase cytoplasmic"/>
    <property type="match status" value="1"/>
</dbReference>
<dbReference type="Gene3D" id="1.10.1160.10">
    <property type="entry name" value="Glutamyl-trna Synthetase, Domain 2"/>
    <property type="match status" value="1"/>
</dbReference>
<dbReference type="Gene3D" id="3.90.800.10">
    <property type="entry name" value="Glutamyl-tRNA Synthetase, Domain 3"/>
    <property type="match status" value="1"/>
</dbReference>
<dbReference type="Gene3D" id="3.40.50.620">
    <property type="entry name" value="HUPs"/>
    <property type="match status" value="1"/>
</dbReference>
<dbReference type="Gene3D" id="2.40.240.10">
    <property type="entry name" value="Ribosomal Protein L25, Chain P"/>
    <property type="match status" value="2"/>
</dbReference>
<dbReference type="HAMAP" id="MF_00126">
    <property type="entry name" value="Gln_tRNA_synth"/>
    <property type="match status" value="1"/>
</dbReference>
<dbReference type="InterPro" id="IPR001412">
    <property type="entry name" value="aa-tRNA-synth_I_CS"/>
</dbReference>
<dbReference type="InterPro" id="IPR004514">
    <property type="entry name" value="Gln-tRNA-synth"/>
</dbReference>
<dbReference type="InterPro" id="IPR050132">
    <property type="entry name" value="Gln/Glu-tRNA_Ligase"/>
</dbReference>
<dbReference type="InterPro" id="IPR022861">
    <property type="entry name" value="Gln_tRNA_ligase_bac"/>
</dbReference>
<dbReference type="InterPro" id="IPR000924">
    <property type="entry name" value="Glu/Gln-tRNA-synth"/>
</dbReference>
<dbReference type="InterPro" id="IPR020058">
    <property type="entry name" value="Glu/Gln-tRNA-synth_Ib_cat-dom"/>
</dbReference>
<dbReference type="InterPro" id="IPR020059">
    <property type="entry name" value="Glu/Gln-tRNA-synth_Ib_codon-bd"/>
</dbReference>
<dbReference type="InterPro" id="IPR020061">
    <property type="entry name" value="Glu_tRNA_lig_a-bdl"/>
</dbReference>
<dbReference type="InterPro" id="IPR020056">
    <property type="entry name" value="Rbsml_bL25/Gln-tRNA_synth_N"/>
</dbReference>
<dbReference type="InterPro" id="IPR011035">
    <property type="entry name" value="Ribosomal_bL25/Gln-tRNA_synth"/>
</dbReference>
<dbReference type="InterPro" id="IPR014729">
    <property type="entry name" value="Rossmann-like_a/b/a_fold"/>
</dbReference>
<dbReference type="InterPro" id="IPR049437">
    <property type="entry name" value="tRNA-synt_1c_C2"/>
</dbReference>
<dbReference type="NCBIfam" id="TIGR00440">
    <property type="entry name" value="glnS"/>
    <property type="match status" value="1"/>
</dbReference>
<dbReference type="NCBIfam" id="NF011291">
    <property type="entry name" value="PRK14703.1"/>
    <property type="match status" value="1"/>
</dbReference>
<dbReference type="PANTHER" id="PTHR43097:SF5">
    <property type="entry name" value="GLUTAMATE--TRNA LIGASE"/>
    <property type="match status" value="1"/>
</dbReference>
<dbReference type="PANTHER" id="PTHR43097">
    <property type="entry name" value="GLUTAMINE-TRNA LIGASE"/>
    <property type="match status" value="1"/>
</dbReference>
<dbReference type="Pfam" id="PF00749">
    <property type="entry name" value="tRNA-synt_1c"/>
    <property type="match status" value="1"/>
</dbReference>
<dbReference type="Pfam" id="PF03950">
    <property type="entry name" value="tRNA-synt_1c_C"/>
    <property type="match status" value="1"/>
</dbReference>
<dbReference type="Pfam" id="PF20974">
    <property type="entry name" value="tRNA-synt_1c_C2"/>
    <property type="match status" value="1"/>
</dbReference>
<dbReference type="PRINTS" id="PR00987">
    <property type="entry name" value="TRNASYNTHGLU"/>
</dbReference>
<dbReference type="SUPFAM" id="SSF52374">
    <property type="entry name" value="Nucleotidylyl transferase"/>
    <property type="match status" value="1"/>
</dbReference>
<dbReference type="SUPFAM" id="SSF50715">
    <property type="entry name" value="Ribosomal protein L25-like"/>
    <property type="match status" value="1"/>
</dbReference>
<dbReference type="PROSITE" id="PS00178">
    <property type="entry name" value="AA_TRNA_LIGASE_I"/>
    <property type="match status" value="1"/>
</dbReference>
<organism>
    <name type="scientific">Pseudomonas aeruginosa (strain ATCC 15692 / DSM 22644 / CIP 104116 / JCM 14847 / LMG 12228 / 1C / PRS 101 / PAO1)</name>
    <dbReference type="NCBI Taxonomy" id="208964"/>
    <lineage>
        <taxon>Bacteria</taxon>
        <taxon>Pseudomonadati</taxon>
        <taxon>Pseudomonadota</taxon>
        <taxon>Gammaproteobacteria</taxon>
        <taxon>Pseudomonadales</taxon>
        <taxon>Pseudomonadaceae</taxon>
        <taxon>Pseudomonas</taxon>
    </lineage>
</organism>
<gene>
    <name evidence="1" type="primary">glnS</name>
    <name type="ordered locus">PA1794</name>
</gene>
<keyword id="KW-0002">3D-structure</keyword>
<keyword id="KW-0030">Aminoacyl-tRNA synthetase</keyword>
<keyword id="KW-0067">ATP-binding</keyword>
<keyword id="KW-0963">Cytoplasm</keyword>
<keyword id="KW-0436">Ligase</keyword>
<keyword id="KW-0547">Nucleotide-binding</keyword>
<keyword id="KW-0648">Protein biosynthesis</keyword>
<keyword id="KW-1185">Reference proteome</keyword>
<accession>Q9I2U8</accession>
<reference key="1">
    <citation type="journal article" date="2000" name="Nature">
        <title>Complete genome sequence of Pseudomonas aeruginosa PAO1, an opportunistic pathogen.</title>
        <authorList>
            <person name="Stover C.K."/>
            <person name="Pham X.-Q.T."/>
            <person name="Erwin A.L."/>
            <person name="Mizoguchi S.D."/>
            <person name="Warrener P."/>
            <person name="Hickey M.J."/>
            <person name="Brinkman F.S.L."/>
            <person name="Hufnagle W.O."/>
            <person name="Kowalik D.J."/>
            <person name="Lagrou M."/>
            <person name="Garber R.L."/>
            <person name="Goltry L."/>
            <person name="Tolentino E."/>
            <person name="Westbrock-Wadman S."/>
            <person name="Yuan Y."/>
            <person name="Brody L.L."/>
            <person name="Coulter S.N."/>
            <person name="Folger K.R."/>
            <person name="Kas A."/>
            <person name="Larbig K."/>
            <person name="Lim R.M."/>
            <person name="Smith K.A."/>
            <person name="Spencer D.H."/>
            <person name="Wong G.K.-S."/>
            <person name="Wu Z."/>
            <person name="Paulsen I.T."/>
            <person name="Reizer J."/>
            <person name="Saier M.H. Jr."/>
            <person name="Hancock R.E.W."/>
            <person name="Lory S."/>
            <person name="Olson M.V."/>
        </authorList>
    </citation>
    <scope>NUCLEOTIDE SEQUENCE [LARGE SCALE GENOMIC DNA]</scope>
    <source>
        <strain>ATCC 15692 / DSM 22644 / CIP 104116 / JCM 14847 / LMG 12228 / 1C / PRS 101 / PAO1</strain>
    </source>
</reference>
<comment type="catalytic activity">
    <reaction evidence="1">
        <text>tRNA(Gln) + L-glutamine + ATP = L-glutaminyl-tRNA(Gln) + AMP + diphosphate</text>
        <dbReference type="Rhea" id="RHEA:20121"/>
        <dbReference type="Rhea" id="RHEA-COMP:9662"/>
        <dbReference type="Rhea" id="RHEA-COMP:9681"/>
        <dbReference type="ChEBI" id="CHEBI:30616"/>
        <dbReference type="ChEBI" id="CHEBI:33019"/>
        <dbReference type="ChEBI" id="CHEBI:58359"/>
        <dbReference type="ChEBI" id="CHEBI:78442"/>
        <dbReference type="ChEBI" id="CHEBI:78521"/>
        <dbReference type="ChEBI" id="CHEBI:456215"/>
        <dbReference type="EC" id="6.1.1.18"/>
    </reaction>
</comment>
<comment type="subunit">
    <text evidence="1">Monomer.</text>
</comment>
<comment type="subcellular location">
    <subcellularLocation>
        <location evidence="1">Cytoplasm</location>
    </subcellularLocation>
</comment>
<comment type="similarity">
    <text evidence="1">Belongs to the class-I aminoacyl-tRNA synthetase family.</text>
</comment>